<accession>Q8GS60</accession>
<accession>O23023</accession>
<sequence>MITVVTSRLSLLPPVFSVVNSSSSRSKDMNLEPKKKVKLREDWREKSRPIPPGGTYPAKDHCSQCGLCDTYYIAHVKEACAFLGDGMSRIESLEPVVHGRGRKADSLQDTYFGVHQEQLYARKLKPVEGAQWTGIVTTIAIEMLKSNMVEAVVCVQSDPEDRLSPRPVLARTPEEVLAARGVKPTLSPNLNTLELIEASGVKRLLFCGVGCQVQALRSVEQHLNLEKLYVLGTNCVDNGTRDGLDKFLKAASKEPETVLHYEFMQDYKVQLKHLDGHIEEVPYFSLPANDLVDVIAPSCYSCFDYTNALADLVIGYMGVPKYSGLNMTDHPQYITVRNERGKEMLSLVENLLEITPTISSGDRRPFVTETVKADDAAKFGQGPAQPAPLFVGNIIAFILNLVGPKGLEFARYSLDYHTIRNYLYVNRKWGKQRANTHMPSYAKKIVEMYNKNGQIDKMLSKK</sequence>
<comment type="function">
    <text evidence="2">Probable iron-sulfur flavoprotein that converts 7-hydroxymethyl chlorophyll a to chlorophyll a using ferredoxin as a reducing equivalent. Catalyzes the reduction of a hydroxymethyl group to a methyl group. Belongs to the chlorophyll catabolic enzymes (CCEs).</text>
</comment>
<comment type="catalytic activity">
    <reaction evidence="2">
        <text>chlorophyll a + 2 oxidized [2Fe-2S]-[ferredoxin] + H2O = 7(1)-hydroxychlorophyll a + 2 reduced [2Fe-2S]-[ferredoxin] + 2 H(+)</text>
        <dbReference type="Rhea" id="RHEA:53544"/>
        <dbReference type="Rhea" id="RHEA-COMP:10000"/>
        <dbReference type="Rhea" id="RHEA-COMP:10001"/>
        <dbReference type="ChEBI" id="CHEBI:15377"/>
        <dbReference type="ChEBI" id="CHEBI:15378"/>
        <dbReference type="ChEBI" id="CHEBI:33737"/>
        <dbReference type="ChEBI" id="CHEBI:33738"/>
        <dbReference type="ChEBI" id="CHEBI:58416"/>
        <dbReference type="ChEBI" id="CHEBI:83377"/>
        <dbReference type="EC" id="1.17.7.2"/>
    </reaction>
</comment>
<comment type="cofactor">
    <cofactor evidence="2">
        <name>FAD</name>
        <dbReference type="ChEBI" id="CHEBI:57692"/>
    </cofactor>
</comment>
<comment type="cofactor">
    <cofactor evidence="2">
        <name>iron-sulfur cluster</name>
        <dbReference type="ChEBI" id="CHEBI:30408"/>
    </cofactor>
</comment>
<comment type="subunit">
    <text evidence="3">Interacts with SGR1, the chlorophyll catabolic enzymes (CCEs) NYC1, NOL and RCCR, and the LHCII complex. Part of a SGR1-CCE-LHCII complex, which acts in chlorophyll breakdown.</text>
</comment>
<comment type="subcellular location">
    <subcellularLocation>
        <location evidence="2 3">Plastid</location>
        <location evidence="2 3">Chloroplast</location>
    </subcellularLocation>
</comment>
<comment type="developmental stage">
    <text evidence="3">Constantly expressed throughout development.</text>
</comment>
<comment type="disruption phenotype">
    <text evidence="2">No visible phenotype under normal growth conditions, but plants accumulate 7-hydroxymethyl chlorophyll a in green leaves.</text>
</comment>
<comment type="similarity">
    <text evidence="4">Belongs to the FrhB family.</text>
</comment>
<comment type="sequence caution" evidence="4">
    <conflict type="erroneous gene model prediction">
        <sequence resource="EMBL-CDS" id="AAB80625"/>
    </conflict>
</comment>
<proteinExistence type="evidence at protein level"/>
<reference key="1">
    <citation type="journal article" date="2000" name="Nature">
        <title>Sequence and analysis of chromosome 1 of the plant Arabidopsis thaliana.</title>
        <authorList>
            <person name="Theologis A."/>
            <person name="Ecker J.R."/>
            <person name="Palm C.J."/>
            <person name="Federspiel N.A."/>
            <person name="Kaul S."/>
            <person name="White O."/>
            <person name="Alonso J."/>
            <person name="Altafi H."/>
            <person name="Araujo R."/>
            <person name="Bowman C.L."/>
            <person name="Brooks S.Y."/>
            <person name="Buehler E."/>
            <person name="Chan A."/>
            <person name="Chao Q."/>
            <person name="Chen H."/>
            <person name="Cheuk R.F."/>
            <person name="Chin C.W."/>
            <person name="Chung M.K."/>
            <person name="Conn L."/>
            <person name="Conway A.B."/>
            <person name="Conway A.R."/>
            <person name="Creasy T.H."/>
            <person name="Dewar K."/>
            <person name="Dunn P."/>
            <person name="Etgu P."/>
            <person name="Feldblyum T.V."/>
            <person name="Feng J.-D."/>
            <person name="Fong B."/>
            <person name="Fujii C.Y."/>
            <person name="Gill J.E."/>
            <person name="Goldsmith A.D."/>
            <person name="Haas B."/>
            <person name="Hansen N.F."/>
            <person name="Hughes B."/>
            <person name="Huizar L."/>
            <person name="Hunter J.L."/>
            <person name="Jenkins J."/>
            <person name="Johnson-Hopson C."/>
            <person name="Khan S."/>
            <person name="Khaykin E."/>
            <person name="Kim C.J."/>
            <person name="Koo H.L."/>
            <person name="Kremenetskaia I."/>
            <person name="Kurtz D.B."/>
            <person name="Kwan A."/>
            <person name="Lam B."/>
            <person name="Langin-Hooper S."/>
            <person name="Lee A."/>
            <person name="Lee J.M."/>
            <person name="Lenz C.A."/>
            <person name="Li J.H."/>
            <person name="Li Y.-P."/>
            <person name="Lin X."/>
            <person name="Liu S.X."/>
            <person name="Liu Z.A."/>
            <person name="Luros J.S."/>
            <person name="Maiti R."/>
            <person name="Marziali A."/>
            <person name="Militscher J."/>
            <person name="Miranda M."/>
            <person name="Nguyen M."/>
            <person name="Nierman W.C."/>
            <person name="Osborne B.I."/>
            <person name="Pai G."/>
            <person name="Peterson J."/>
            <person name="Pham P.K."/>
            <person name="Rizzo M."/>
            <person name="Rooney T."/>
            <person name="Rowley D."/>
            <person name="Sakano H."/>
            <person name="Salzberg S.L."/>
            <person name="Schwartz J.R."/>
            <person name="Shinn P."/>
            <person name="Southwick A.M."/>
            <person name="Sun H."/>
            <person name="Tallon L.J."/>
            <person name="Tambunga G."/>
            <person name="Toriumi M.J."/>
            <person name="Town C.D."/>
            <person name="Utterback T."/>
            <person name="Van Aken S."/>
            <person name="Vaysberg M."/>
            <person name="Vysotskaia V.S."/>
            <person name="Walker M."/>
            <person name="Wu D."/>
            <person name="Yu G."/>
            <person name="Fraser C.M."/>
            <person name="Venter J.C."/>
            <person name="Davis R.W."/>
        </authorList>
    </citation>
    <scope>NUCLEOTIDE SEQUENCE [LARGE SCALE GENOMIC DNA]</scope>
    <source>
        <strain>cv. Columbia</strain>
    </source>
</reference>
<reference key="2">
    <citation type="journal article" date="2017" name="Plant J.">
        <title>Araport11: a complete reannotation of the Arabidopsis thaliana reference genome.</title>
        <authorList>
            <person name="Cheng C.Y."/>
            <person name="Krishnakumar V."/>
            <person name="Chan A.P."/>
            <person name="Thibaud-Nissen F."/>
            <person name="Schobel S."/>
            <person name="Town C.D."/>
        </authorList>
    </citation>
    <scope>GENOME REANNOTATION</scope>
    <source>
        <strain>cv. Columbia</strain>
    </source>
</reference>
<reference key="3">
    <citation type="journal article" date="2002" name="Science">
        <title>Functional annotation of a full-length Arabidopsis cDNA collection.</title>
        <authorList>
            <person name="Seki M."/>
            <person name="Narusaka M."/>
            <person name="Kamiya A."/>
            <person name="Ishida J."/>
            <person name="Satou M."/>
            <person name="Sakurai T."/>
            <person name="Nakajima M."/>
            <person name="Enju A."/>
            <person name="Akiyama K."/>
            <person name="Oono Y."/>
            <person name="Muramatsu M."/>
            <person name="Hayashizaki Y."/>
            <person name="Kawai J."/>
            <person name="Carninci P."/>
            <person name="Itoh M."/>
            <person name="Ishii Y."/>
            <person name="Arakawa T."/>
            <person name="Shibata K."/>
            <person name="Shinagawa A."/>
            <person name="Shinozaki K."/>
        </authorList>
    </citation>
    <scope>NUCLEOTIDE SEQUENCE [LARGE SCALE MRNA]</scope>
    <source>
        <strain>cv. Columbia</strain>
    </source>
</reference>
<reference key="4">
    <citation type="journal article" date="2003" name="Science">
        <title>Empirical analysis of transcriptional activity in the Arabidopsis genome.</title>
        <authorList>
            <person name="Yamada K."/>
            <person name="Lim J."/>
            <person name="Dale J.M."/>
            <person name="Chen H."/>
            <person name="Shinn P."/>
            <person name="Palm C.J."/>
            <person name="Southwick A.M."/>
            <person name="Wu H.C."/>
            <person name="Kim C.J."/>
            <person name="Nguyen M."/>
            <person name="Pham P.K."/>
            <person name="Cheuk R.F."/>
            <person name="Karlin-Newmann G."/>
            <person name="Liu S.X."/>
            <person name="Lam B."/>
            <person name="Sakano H."/>
            <person name="Wu T."/>
            <person name="Yu G."/>
            <person name="Miranda M."/>
            <person name="Quach H.L."/>
            <person name="Tripp M."/>
            <person name="Chang C.H."/>
            <person name="Lee J.M."/>
            <person name="Toriumi M.J."/>
            <person name="Chan M.M."/>
            <person name="Tang C.C."/>
            <person name="Onodera C.S."/>
            <person name="Deng J.M."/>
            <person name="Akiyama K."/>
            <person name="Ansari Y."/>
            <person name="Arakawa T."/>
            <person name="Banh J."/>
            <person name="Banno F."/>
            <person name="Bowser L."/>
            <person name="Brooks S.Y."/>
            <person name="Carninci P."/>
            <person name="Chao Q."/>
            <person name="Choy N."/>
            <person name="Enju A."/>
            <person name="Goldsmith A.D."/>
            <person name="Gurjal M."/>
            <person name="Hansen N.F."/>
            <person name="Hayashizaki Y."/>
            <person name="Johnson-Hopson C."/>
            <person name="Hsuan V.W."/>
            <person name="Iida K."/>
            <person name="Karnes M."/>
            <person name="Khan S."/>
            <person name="Koesema E."/>
            <person name="Ishida J."/>
            <person name="Jiang P.X."/>
            <person name="Jones T."/>
            <person name="Kawai J."/>
            <person name="Kamiya A."/>
            <person name="Meyers C."/>
            <person name="Nakajima M."/>
            <person name="Narusaka M."/>
            <person name="Seki M."/>
            <person name="Sakurai T."/>
            <person name="Satou M."/>
            <person name="Tamse R."/>
            <person name="Vaysberg M."/>
            <person name="Wallender E.K."/>
            <person name="Wong C."/>
            <person name="Yamamura Y."/>
            <person name="Yuan S."/>
            <person name="Shinozaki K."/>
            <person name="Davis R.W."/>
            <person name="Theologis A."/>
            <person name="Ecker J.R."/>
        </authorList>
    </citation>
    <scope>NUCLEOTIDE SEQUENCE [LARGE SCALE MRNA]</scope>
    <source>
        <strain>cv. Columbia</strain>
    </source>
</reference>
<reference key="5">
    <citation type="journal article" date="2011" name="Plant Cell">
        <title>Identification of the 7-hydroxymethyl chlorophyll a reductase of the chlorophyll cycle in Arabidopsis.</title>
        <authorList>
            <person name="Meguro M."/>
            <person name="Ito H."/>
            <person name="Takabayashi A."/>
            <person name="Tanaka R."/>
            <person name="Tanaka A."/>
        </authorList>
    </citation>
    <scope>FUNCTION</scope>
    <scope>CATALYTIC ACTIVITY</scope>
    <scope>COFACTOR</scope>
    <scope>SUBCELLULAR LOCATION</scope>
    <scope>DISRUPTION PHENOTYPE</scope>
</reference>
<reference key="6">
    <citation type="journal article" date="2013" name="Biochem. Biophys. Res. Commun.">
        <title>7-Hydroxymethyl chlorophyll a reductase functions in metabolic channeling of chlorophyll breakdown intermediates during leaf senescence.</title>
        <authorList>
            <person name="Sakuraba Y."/>
            <person name="Kim Y.S."/>
            <person name="Yoo S.C."/>
            <person name="Hortensteiner S."/>
            <person name="Paek N.C."/>
        </authorList>
    </citation>
    <scope>INTERACTION WITH LHCII COMPLEX; SGR1; NYC1; NOL; PPH; PAO AND RCCR</scope>
    <scope>SUBCELLULAR LOCATION</scope>
    <scope>DEVELOPMENTAL STAGE</scope>
</reference>
<keyword id="KW-0002">3D-structure</keyword>
<keyword id="KW-0150">Chloroplast</keyword>
<keyword id="KW-0274">FAD</keyword>
<keyword id="KW-0285">Flavoprotein</keyword>
<keyword id="KW-0408">Iron</keyword>
<keyword id="KW-0411">Iron-sulfur</keyword>
<keyword id="KW-0479">Metal-binding</keyword>
<keyword id="KW-0560">Oxidoreductase</keyword>
<keyword id="KW-0934">Plastid</keyword>
<keyword id="KW-1185">Reference proteome</keyword>
<keyword id="KW-0809">Transit peptide</keyword>
<organism>
    <name type="scientific">Arabidopsis thaliana</name>
    <name type="common">Mouse-ear cress</name>
    <dbReference type="NCBI Taxonomy" id="3702"/>
    <lineage>
        <taxon>Eukaryota</taxon>
        <taxon>Viridiplantae</taxon>
        <taxon>Streptophyta</taxon>
        <taxon>Embryophyta</taxon>
        <taxon>Tracheophyta</taxon>
        <taxon>Spermatophyta</taxon>
        <taxon>Magnoliopsida</taxon>
        <taxon>eudicotyledons</taxon>
        <taxon>Gunneridae</taxon>
        <taxon>Pentapetalae</taxon>
        <taxon>rosids</taxon>
        <taxon>malvids</taxon>
        <taxon>Brassicales</taxon>
        <taxon>Brassicaceae</taxon>
        <taxon>Camelineae</taxon>
        <taxon>Arabidopsis</taxon>
    </lineage>
</organism>
<protein>
    <recommendedName>
        <fullName>7-hydroxymethyl chlorophyll a reductase, chloroplastic</fullName>
        <ecNumber evidence="2">1.17.7.2</ecNumber>
    </recommendedName>
</protein>
<evidence type="ECO:0000255" key="1"/>
<evidence type="ECO:0000269" key="2">
    <source>
    </source>
</evidence>
<evidence type="ECO:0000269" key="3">
    <source>
    </source>
</evidence>
<evidence type="ECO:0000305" key="4"/>
<evidence type="ECO:0007829" key="5">
    <source>
        <dbReference type="PDB" id="5DQR"/>
    </source>
</evidence>
<dbReference type="EC" id="1.17.7.2" evidence="2"/>
<dbReference type="EMBL" id="AC002376">
    <property type="protein sequence ID" value="AAB80625.1"/>
    <property type="status" value="ALT_SEQ"/>
    <property type="molecule type" value="Genomic_DNA"/>
</dbReference>
<dbReference type="EMBL" id="CP002684">
    <property type="protein sequence ID" value="AEE27722.1"/>
    <property type="molecule type" value="Genomic_DNA"/>
</dbReference>
<dbReference type="EMBL" id="AK117982">
    <property type="protein sequence ID" value="BAC42618.1"/>
    <property type="molecule type" value="mRNA"/>
</dbReference>
<dbReference type="EMBL" id="BT002029">
    <property type="protein sequence ID" value="AAN72040.1"/>
    <property type="molecule type" value="mRNA"/>
</dbReference>
<dbReference type="EMBL" id="BT006603">
    <property type="protein sequence ID" value="AAP31947.1"/>
    <property type="molecule type" value="mRNA"/>
</dbReference>
<dbReference type="PIR" id="H86178">
    <property type="entry name" value="H86178"/>
</dbReference>
<dbReference type="RefSeq" id="NP_171956.2">
    <property type="nucleotide sequence ID" value="NM_100341.4"/>
</dbReference>
<dbReference type="PDB" id="5DQR">
    <property type="method" value="X-ray"/>
    <property type="resolution" value="2.70 A"/>
    <property type="chains" value="A/B/C/D/E/F=26-462"/>
</dbReference>
<dbReference type="PDBsum" id="5DQR"/>
<dbReference type="SMR" id="Q8GS60"/>
<dbReference type="BioGRID" id="24707">
    <property type="interactions" value="8"/>
</dbReference>
<dbReference type="FunCoup" id="Q8GS60">
    <property type="interactions" value="41"/>
</dbReference>
<dbReference type="IntAct" id="Q8GS60">
    <property type="interactions" value="1"/>
</dbReference>
<dbReference type="MINT" id="Q8GS60"/>
<dbReference type="STRING" id="3702.Q8GS60"/>
<dbReference type="iPTMnet" id="Q8GS60"/>
<dbReference type="PaxDb" id="3702-AT1G04620.1"/>
<dbReference type="ProteomicsDB" id="247165"/>
<dbReference type="EnsemblPlants" id="AT1G04620.1">
    <property type="protein sequence ID" value="AT1G04620.1"/>
    <property type="gene ID" value="AT1G04620"/>
</dbReference>
<dbReference type="GeneID" id="839472"/>
<dbReference type="Gramene" id="AT1G04620.1">
    <property type="protein sequence ID" value="AT1G04620.1"/>
    <property type="gene ID" value="AT1G04620"/>
</dbReference>
<dbReference type="KEGG" id="ath:AT1G04620"/>
<dbReference type="Araport" id="AT1G04620"/>
<dbReference type="TAIR" id="AT1G04620">
    <property type="gene designation" value="HCAR"/>
</dbReference>
<dbReference type="eggNOG" id="ENOG502QR65">
    <property type="taxonomic scope" value="Eukaryota"/>
</dbReference>
<dbReference type="HOGENOM" id="CLU_038110_0_0_1"/>
<dbReference type="InParanoid" id="Q8GS60"/>
<dbReference type="OMA" id="WTGIVST"/>
<dbReference type="PhylomeDB" id="Q8GS60"/>
<dbReference type="BioCyc" id="ARA:AT1G04620-MONOMER"/>
<dbReference type="BioCyc" id="MetaCyc:AT1G04620-MONOMER"/>
<dbReference type="BRENDA" id="1.17.7.2">
    <property type="organism ID" value="399"/>
</dbReference>
<dbReference type="PRO" id="PR:Q8GS60"/>
<dbReference type="Proteomes" id="UP000006548">
    <property type="component" value="Chromosome 1"/>
</dbReference>
<dbReference type="ExpressionAtlas" id="Q8GS60">
    <property type="expression patterns" value="baseline and differential"/>
</dbReference>
<dbReference type="GO" id="GO:0009507">
    <property type="term" value="C:chloroplast"/>
    <property type="evidence" value="ECO:0000314"/>
    <property type="project" value="TAIR"/>
</dbReference>
<dbReference type="GO" id="GO:0005576">
    <property type="term" value="C:extracellular region"/>
    <property type="evidence" value="ECO:0007005"/>
    <property type="project" value="TAIR"/>
</dbReference>
<dbReference type="GO" id="GO:0090415">
    <property type="term" value="F:7-hydroxymethyl chlorophyll a reductase activity"/>
    <property type="evidence" value="ECO:0000314"/>
    <property type="project" value="TAIR"/>
</dbReference>
<dbReference type="GO" id="GO:0051536">
    <property type="term" value="F:iron-sulfur cluster binding"/>
    <property type="evidence" value="ECO:0007669"/>
    <property type="project" value="UniProtKB-KW"/>
</dbReference>
<dbReference type="GO" id="GO:0046872">
    <property type="term" value="F:metal ion binding"/>
    <property type="evidence" value="ECO:0007669"/>
    <property type="project" value="UniProtKB-KW"/>
</dbReference>
<dbReference type="GO" id="GO:0033354">
    <property type="term" value="P:chlorophyll cycle"/>
    <property type="evidence" value="ECO:0000314"/>
    <property type="project" value="TAIR"/>
</dbReference>
<dbReference type="GO" id="GO:0015994">
    <property type="term" value="P:chlorophyll metabolic process"/>
    <property type="evidence" value="ECO:0000314"/>
    <property type="project" value="TAIR"/>
</dbReference>
<dbReference type="InterPro" id="IPR007516">
    <property type="entry name" value="Co_F420_Hydgase/DH_bsu_N"/>
</dbReference>
<dbReference type="InterPro" id="IPR045220">
    <property type="entry name" value="FRHB/FDHB/HCAR-like"/>
</dbReference>
<dbReference type="InterPro" id="IPR007525">
    <property type="entry name" value="FrhB_FdhB_C"/>
</dbReference>
<dbReference type="PANTHER" id="PTHR31332">
    <property type="entry name" value="7-HYDROXYMETHYL CHLOROPHYLL A REDUCTASE, CHLOROPLASTIC"/>
    <property type="match status" value="1"/>
</dbReference>
<dbReference type="PANTHER" id="PTHR31332:SF0">
    <property type="entry name" value="7-HYDROXYMETHYL CHLOROPHYLL A REDUCTASE, CHLOROPLASTIC"/>
    <property type="match status" value="1"/>
</dbReference>
<dbReference type="Pfam" id="PF04432">
    <property type="entry name" value="FrhB_FdhB_C"/>
    <property type="match status" value="1"/>
</dbReference>
<dbReference type="Pfam" id="PF04422">
    <property type="entry name" value="FrhB_FdhB_N"/>
    <property type="match status" value="1"/>
</dbReference>
<name>HCAR_ARATH</name>
<feature type="transit peptide" description="Chloroplast" evidence="1">
    <location>
        <begin position="1"/>
        <end position="20"/>
    </location>
</feature>
<feature type="chain" id="PRO_0000415615" description="7-hydroxymethyl chlorophyll a reductase, chloroplastic">
    <location>
        <begin position="21"/>
        <end position="462"/>
    </location>
</feature>
<feature type="strand" evidence="5">
    <location>
        <begin position="44"/>
        <end position="46"/>
    </location>
</feature>
<feature type="helix" evidence="5">
    <location>
        <begin position="59"/>
        <end position="61"/>
    </location>
</feature>
<feature type="helix" evidence="5">
    <location>
        <begin position="67"/>
        <end position="69"/>
    </location>
</feature>
<feature type="helix" evidence="5">
    <location>
        <begin position="71"/>
        <end position="78"/>
    </location>
</feature>
<feature type="helix" evidence="5">
    <location>
        <begin position="86"/>
        <end position="89"/>
    </location>
</feature>
<feature type="helix" evidence="5">
    <location>
        <begin position="90"/>
        <end position="97"/>
    </location>
</feature>
<feature type="helix" evidence="5">
    <location>
        <begin position="107"/>
        <end position="112"/>
    </location>
</feature>
<feature type="strand" evidence="5">
    <location>
        <begin position="116"/>
        <end position="125"/>
    </location>
</feature>
<feature type="strand" evidence="5">
    <location>
        <begin position="130"/>
        <end position="133"/>
    </location>
</feature>
<feature type="helix" evidence="5">
    <location>
        <begin position="135"/>
        <end position="145"/>
    </location>
</feature>
<feature type="strand" evidence="5">
    <location>
        <begin position="150"/>
        <end position="158"/>
    </location>
</feature>
<feature type="strand" evidence="5">
    <location>
        <begin position="161"/>
        <end position="170"/>
    </location>
</feature>
<feature type="helix" evidence="5">
    <location>
        <begin position="173"/>
        <end position="177"/>
    </location>
</feature>
<feature type="helix" evidence="5">
    <location>
        <begin position="193"/>
        <end position="197"/>
    </location>
</feature>
<feature type="turn" evidence="5">
    <location>
        <begin position="198"/>
        <end position="200"/>
    </location>
</feature>
<feature type="strand" evidence="5">
    <location>
        <begin position="203"/>
        <end position="208"/>
    </location>
</feature>
<feature type="helix" evidence="5">
    <location>
        <begin position="210"/>
        <end position="218"/>
    </location>
</feature>
<feature type="helix" evidence="5">
    <location>
        <begin position="220"/>
        <end position="223"/>
    </location>
</feature>
<feature type="strand" evidence="5">
    <location>
        <begin position="226"/>
        <end position="233"/>
    </location>
</feature>
<feature type="helix" evidence="5">
    <location>
        <begin position="241"/>
        <end position="251"/>
    </location>
</feature>
<feature type="strand" evidence="5">
    <location>
        <begin position="257"/>
        <end position="263"/>
    </location>
</feature>
<feature type="strand" evidence="5">
    <location>
        <begin position="267"/>
        <end position="273"/>
    </location>
</feature>
<feature type="strand" evidence="5">
    <location>
        <begin position="278"/>
        <end position="282"/>
    </location>
</feature>
<feature type="helix" evidence="5">
    <location>
        <begin position="283"/>
        <end position="285"/>
    </location>
</feature>
<feature type="turn" evidence="5">
    <location>
        <begin position="288"/>
        <end position="290"/>
    </location>
</feature>
<feature type="helix" evidence="5">
    <location>
        <begin position="291"/>
        <end position="293"/>
    </location>
</feature>
<feature type="helix" evidence="5">
    <location>
        <begin position="297"/>
        <end position="300"/>
    </location>
</feature>
<feature type="strand" evidence="5">
    <location>
        <begin position="310"/>
        <end position="316"/>
    </location>
</feature>
<feature type="helix" evidence="5">
    <location>
        <begin position="327"/>
        <end position="329"/>
    </location>
</feature>
<feature type="strand" evidence="5">
    <location>
        <begin position="332"/>
        <end position="336"/>
    </location>
</feature>
<feature type="helix" evidence="5">
    <location>
        <begin position="339"/>
        <end position="346"/>
    </location>
</feature>
<feature type="helix" evidence="5">
    <location>
        <begin position="347"/>
        <end position="351"/>
    </location>
</feature>
<feature type="strand" evidence="5">
    <location>
        <begin position="352"/>
        <end position="356"/>
    </location>
</feature>
<feature type="strand" evidence="5">
    <location>
        <begin position="359"/>
        <end position="361"/>
    </location>
</feature>
<feature type="helix" evidence="5">
    <location>
        <begin position="364"/>
        <end position="375"/>
    </location>
</feature>
<feature type="turn" evidence="5">
    <location>
        <begin position="378"/>
        <end position="380"/>
    </location>
</feature>
<feature type="helix" evidence="5">
    <location>
        <begin position="389"/>
        <end position="402"/>
    </location>
</feature>
<feature type="helix" evidence="5">
    <location>
        <begin position="407"/>
        <end position="428"/>
    </location>
</feature>
<feature type="helix" evidence="5">
    <location>
        <begin position="430"/>
        <end position="437"/>
    </location>
</feature>
<feature type="helix" evidence="5">
    <location>
        <begin position="440"/>
        <end position="448"/>
    </location>
</feature>
<feature type="helix" evidence="5">
    <location>
        <begin position="454"/>
        <end position="459"/>
    </location>
</feature>
<gene>
    <name type="primary">HCAR</name>
    <name type="synonym">HMCR</name>
    <name type="ordered locus">At1g04620</name>
    <name type="ORF">T1G11.13</name>
</gene>